<reference key="1">
    <citation type="submission" date="2005-07" db="EMBL/GenBank/DDBJ databases">
        <title>Complete sequence of Synechococcus sp. CC9605.</title>
        <authorList>
            <consortium name="US DOE Joint Genome Institute"/>
            <person name="Copeland A."/>
            <person name="Lucas S."/>
            <person name="Lapidus A."/>
            <person name="Barry K."/>
            <person name="Detter J.C."/>
            <person name="Glavina T."/>
            <person name="Hammon N."/>
            <person name="Israni S."/>
            <person name="Pitluck S."/>
            <person name="Schmutz J."/>
            <person name="Martinez M."/>
            <person name="Larimer F."/>
            <person name="Land M."/>
            <person name="Kyrpides N."/>
            <person name="Ivanova N."/>
            <person name="Richardson P."/>
        </authorList>
    </citation>
    <scope>NUCLEOTIDE SEQUENCE [LARGE SCALE GENOMIC DNA]</scope>
    <source>
        <strain>CC9605</strain>
    </source>
</reference>
<gene>
    <name evidence="1" type="primary">ispH</name>
    <name type="ordered locus">Syncc9605_0246</name>
</gene>
<evidence type="ECO:0000255" key="1">
    <source>
        <dbReference type="HAMAP-Rule" id="MF_00191"/>
    </source>
</evidence>
<accession>Q3AN10</accession>
<organism>
    <name type="scientific">Synechococcus sp. (strain CC9605)</name>
    <dbReference type="NCBI Taxonomy" id="110662"/>
    <lineage>
        <taxon>Bacteria</taxon>
        <taxon>Bacillati</taxon>
        <taxon>Cyanobacteriota</taxon>
        <taxon>Cyanophyceae</taxon>
        <taxon>Synechococcales</taxon>
        <taxon>Synechococcaceae</taxon>
        <taxon>Synechococcus</taxon>
    </lineage>
</organism>
<sequence length="399" mass="44945">MDTHAFKRSLHHSERYNRRGFGRAEEVAESLEQAYQSGLIGTIRDNGYRLEHGRLNVRLAEAFGFCWGVERAVAMAYETRKHYPSERLWITNEIIHNPSVNDHLREMDVQFIPVEQGVKDFSGVTSGDVVILPAFGATVQEMQLLNERGCHIVDTTCPWVSKVWNTVEKHKKHTFTSIIHGKVKHEETLATSSFAGTYLVVLDLEEAQYVADYILGNGDREDFIKRFAKACSPGFDPDRDLERLGVANQTTMLKSETEEIGRLFERTMLSKYGPTQLNDHFLAFNTICDATQERQDAMFSLVDEPLDLMVVIGGFNSSNTTHLQEIAVSRGIRSFHIDTPERIDVGSNSIEHKPLAADLCREGDFLPEGPVRVGITSGASTPDRAVEEVIEKLMQLSEN</sequence>
<feature type="chain" id="PRO_1000021189" description="4-hydroxy-3-methylbut-2-enyl diphosphate reductase">
    <location>
        <begin position="1"/>
        <end position="399"/>
    </location>
</feature>
<feature type="active site" description="Proton donor" evidence="1">
    <location>
        <position position="187"/>
    </location>
</feature>
<feature type="binding site" evidence="1">
    <location>
        <position position="66"/>
    </location>
    <ligand>
        <name>[4Fe-4S] cluster</name>
        <dbReference type="ChEBI" id="CHEBI:49883"/>
    </ligand>
</feature>
<feature type="binding site" evidence="1">
    <location>
        <position position="96"/>
    </location>
    <ligand>
        <name>(2E)-4-hydroxy-3-methylbut-2-enyl diphosphate</name>
        <dbReference type="ChEBI" id="CHEBI:128753"/>
    </ligand>
</feature>
<feature type="binding site" evidence="1">
    <location>
        <position position="96"/>
    </location>
    <ligand>
        <name>dimethylallyl diphosphate</name>
        <dbReference type="ChEBI" id="CHEBI:57623"/>
    </ligand>
</feature>
<feature type="binding site" evidence="1">
    <location>
        <position position="96"/>
    </location>
    <ligand>
        <name>isopentenyl diphosphate</name>
        <dbReference type="ChEBI" id="CHEBI:128769"/>
    </ligand>
</feature>
<feature type="binding site" evidence="1">
    <location>
        <position position="157"/>
    </location>
    <ligand>
        <name>[4Fe-4S] cluster</name>
        <dbReference type="ChEBI" id="CHEBI:49883"/>
    </ligand>
</feature>
<feature type="binding site" evidence="1">
    <location>
        <position position="185"/>
    </location>
    <ligand>
        <name>(2E)-4-hydroxy-3-methylbut-2-enyl diphosphate</name>
        <dbReference type="ChEBI" id="CHEBI:128753"/>
    </ligand>
</feature>
<feature type="binding site" evidence="1">
    <location>
        <position position="185"/>
    </location>
    <ligand>
        <name>dimethylallyl diphosphate</name>
        <dbReference type="ChEBI" id="CHEBI:57623"/>
    </ligand>
</feature>
<feature type="binding site" evidence="1">
    <location>
        <position position="185"/>
    </location>
    <ligand>
        <name>isopentenyl diphosphate</name>
        <dbReference type="ChEBI" id="CHEBI:128769"/>
    </ligand>
</feature>
<feature type="binding site" evidence="1">
    <location>
        <position position="250"/>
    </location>
    <ligand>
        <name>(2E)-4-hydroxy-3-methylbut-2-enyl diphosphate</name>
        <dbReference type="ChEBI" id="CHEBI:128753"/>
    </ligand>
</feature>
<feature type="binding site" evidence="1">
    <location>
        <position position="288"/>
    </location>
    <ligand>
        <name>[4Fe-4S] cluster</name>
        <dbReference type="ChEBI" id="CHEBI:49883"/>
    </ligand>
</feature>
<feature type="binding site" evidence="1">
    <location>
        <position position="317"/>
    </location>
    <ligand>
        <name>(2E)-4-hydroxy-3-methylbut-2-enyl diphosphate</name>
        <dbReference type="ChEBI" id="CHEBI:128753"/>
    </ligand>
</feature>
<feature type="binding site" evidence="1">
    <location>
        <position position="317"/>
    </location>
    <ligand>
        <name>dimethylallyl diphosphate</name>
        <dbReference type="ChEBI" id="CHEBI:57623"/>
    </ligand>
</feature>
<feature type="binding site" evidence="1">
    <location>
        <position position="317"/>
    </location>
    <ligand>
        <name>isopentenyl diphosphate</name>
        <dbReference type="ChEBI" id="CHEBI:128769"/>
    </ligand>
</feature>
<feature type="binding site" evidence="1">
    <location>
        <position position="318"/>
    </location>
    <ligand>
        <name>(2E)-4-hydroxy-3-methylbut-2-enyl diphosphate</name>
        <dbReference type="ChEBI" id="CHEBI:128753"/>
    </ligand>
</feature>
<feature type="binding site" evidence="1">
    <location>
        <position position="318"/>
    </location>
    <ligand>
        <name>dimethylallyl diphosphate</name>
        <dbReference type="ChEBI" id="CHEBI:57623"/>
    </ligand>
</feature>
<feature type="binding site" evidence="1">
    <location>
        <position position="318"/>
    </location>
    <ligand>
        <name>isopentenyl diphosphate</name>
        <dbReference type="ChEBI" id="CHEBI:128769"/>
    </ligand>
</feature>
<feature type="binding site" evidence="1">
    <location>
        <position position="319"/>
    </location>
    <ligand>
        <name>(2E)-4-hydroxy-3-methylbut-2-enyl diphosphate</name>
        <dbReference type="ChEBI" id="CHEBI:128753"/>
    </ligand>
</feature>
<feature type="binding site" evidence="1">
    <location>
        <position position="319"/>
    </location>
    <ligand>
        <name>dimethylallyl diphosphate</name>
        <dbReference type="ChEBI" id="CHEBI:57623"/>
    </ligand>
</feature>
<feature type="binding site" evidence="1">
    <location>
        <position position="319"/>
    </location>
    <ligand>
        <name>isopentenyl diphosphate</name>
        <dbReference type="ChEBI" id="CHEBI:128769"/>
    </ligand>
</feature>
<feature type="binding site" evidence="1">
    <location>
        <position position="380"/>
    </location>
    <ligand>
        <name>(2E)-4-hydroxy-3-methylbut-2-enyl diphosphate</name>
        <dbReference type="ChEBI" id="CHEBI:128753"/>
    </ligand>
</feature>
<feature type="binding site" evidence="1">
    <location>
        <position position="380"/>
    </location>
    <ligand>
        <name>dimethylallyl diphosphate</name>
        <dbReference type="ChEBI" id="CHEBI:57623"/>
    </ligand>
</feature>
<feature type="binding site" evidence="1">
    <location>
        <position position="380"/>
    </location>
    <ligand>
        <name>isopentenyl diphosphate</name>
        <dbReference type="ChEBI" id="CHEBI:128769"/>
    </ligand>
</feature>
<keyword id="KW-0004">4Fe-4S</keyword>
<keyword id="KW-0408">Iron</keyword>
<keyword id="KW-0411">Iron-sulfur</keyword>
<keyword id="KW-0414">Isoprene biosynthesis</keyword>
<keyword id="KW-0479">Metal-binding</keyword>
<keyword id="KW-0560">Oxidoreductase</keyword>
<comment type="function">
    <text evidence="1">Catalyzes the conversion of 1-hydroxy-2-methyl-2-(E)-butenyl 4-diphosphate (HMBPP) into a mixture of isopentenyl diphosphate (IPP) and dimethylallyl diphosphate (DMAPP). Acts in the terminal step of the DOXP/MEP pathway for isoprenoid precursor biosynthesis.</text>
</comment>
<comment type="catalytic activity">
    <reaction evidence="1">
        <text>isopentenyl diphosphate + 2 oxidized [2Fe-2S]-[ferredoxin] + H2O = (2E)-4-hydroxy-3-methylbut-2-enyl diphosphate + 2 reduced [2Fe-2S]-[ferredoxin] + 2 H(+)</text>
        <dbReference type="Rhea" id="RHEA:24488"/>
        <dbReference type="Rhea" id="RHEA-COMP:10000"/>
        <dbReference type="Rhea" id="RHEA-COMP:10001"/>
        <dbReference type="ChEBI" id="CHEBI:15377"/>
        <dbReference type="ChEBI" id="CHEBI:15378"/>
        <dbReference type="ChEBI" id="CHEBI:33737"/>
        <dbReference type="ChEBI" id="CHEBI:33738"/>
        <dbReference type="ChEBI" id="CHEBI:128753"/>
        <dbReference type="ChEBI" id="CHEBI:128769"/>
        <dbReference type="EC" id="1.17.7.4"/>
    </reaction>
</comment>
<comment type="catalytic activity">
    <reaction evidence="1">
        <text>dimethylallyl diphosphate + 2 oxidized [2Fe-2S]-[ferredoxin] + H2O = (2E)-4-hydroxy-3-methylbut-2-enyl diphosphate + 2 reduced [2Fe-2S]-[ferredoxin] + 2 H(+)</text>
        <dbReference type="Rhea" id="RHEA:24825"/>
        <dbReference type="Rhea" id="RHEA-COMP:10000"/>
        <dbReference type="Rhea" id="RHEA-COMP:10001"/>
        <dbReference type="ChEBI" id="CHEBI:15377"/>
        <dbReference type="ChEBI" id="CHEBI:15378"/>
        <dbReference type="ChEBI" id="CHEBI:33737"/>
        <dbReference type="ChEBI" id="CHEBI:33738"/>
        <dbReference type="ChEBI" id="CHEBI:57623"/>
        <dbReference type="ChEBI" id="CHEBI:128753"/>
        <dbReference type="EC" id="1.17.7.4"/>
    </reaction>
</comment>
<comment type="cofactor">
    <cofactor evidence="1">
        <name>[4Fe-4S] cluster</name>
        <dbReference type="ChEBI" id="CHEBI:49883"/>
    </cofactor>
    <text evidence="1">Binds 1 [4Fe-4S] cluster per subunit.</text>
</comment>
<comment type="pathway">
    <text evidence="1">Isoprenoid biosynthesis; dimethylallyl diphosphate biosynthesis; dimethylallyl diphosphate from (2E)-4-hydroxy-3-methylbutenyl diphosphate: step 1/1.</text>
</comment>
<comment type="pathway">
    <text evidence="1">Isoprenoid biosynthesis; isopentenyl diphosphate biosynthesis via DXP pathway; isopentenyl diphosphate from 1-deoxy-D-xylulose 5-phosphate: step 6/6.</text>
</comment>
<comment type="similarity">
    <text evidence="1">Belongs to the IspH family.</text>
</comment>
<dbReference type="EC" id="1.17.7.4" evidence="1"/>
<dbReference type="EMBL" id="CP000110">
    <property type="protein sequence ID" value="ABB34022.1"/>
    <property type="molecule type" value="Genomic_DNA"/>
</dbReference>
<dbReference type="RefSeq" id="WP_011363276.1">
    <property type="nucleotide sequence ID" value="NC_007516.1"/>
</dbReference>
<dbReference type="SMR" id="Q3AN10"/>
<dbReference type="STRING" id="110662.Syncc9605_0246"/>
<dbReference type="KEGG" id="syd:Syncc9605_0246"/>
<dbReference type="eggNOG" id="COG0761">
    <property type="taxonomic scope" value="Bacteria"/>
</dbReference>
<dbReference type="HOGENOM" id="CLU_027486_4_0_3"/>
<dbReference type="OrthoDB" id="9804077at2"/>
<dbReference type="UniPathway" id="UPA00056">
    <property type="reaction ID" value="UER00097"/>
</dbReference>
<dbReference type="UniPathway" id="UPA00059">
    <property type="reaction ID" value="UER00105"/>
</dbReference>
<dbReference type="GO" id="GO:0051539">
    <property type="term" value="F:4 iron, 4 sulfur cluster binding"/>
    <property type="evidence" value="ECO:0007669"/>
    <property type="project" value="UniProtKB-UniRule"/>
</dbReference>
<dbReference type="GO" id="GO:0051745">
    <property type="term" value="F:4-hydroxy-3-methylbut-2-enyl diphosphate reductase activity"/>
    <property type="evidence" value="ECO:0007669"/>
    <property type="project" value="UniProtKB-UniRule"/>
</dbReference>
<dbReference type="GO" id="GO:0046872">
    <property type="term" value="F:metal ion binding"/>
    <property type="evidence" value="ECO:0007669"/>
    <property type="project" value="UniProtKB-KW"/>
</dbReference>
<dbReference type="GO" id="GO:0050992">
    <property type="term" value="P:dimethylallyl diphosphate biosynthetic process"/>
    <property type="evidence" value="ECO:0007669"/>
    <property type="project" value="UniProtKB-UniRule"/>
</dbReference>
<dbReference type="GO" id="GO:0019288">
    <property type="term" value="P:isopentenyl diphosphate biosynthetic process, methylerythritol 4-phosphate pathway"/>
    <property type="evidence" value="ECO:0007669"/>
    <property type="project" value="UniProtKB-UniRule"/>
</dbReference>
<dbReference type="GO" id="GO:0016114">
    <property type="term" value="P:terpenoid biosynthetic process"/>
    <property type="evidence" value="ECO:0007669"/>
    <property type="project" value="UniProtKB-UniRule"/>
</dbReference>
<dbReference type="CDD" id="cd13944">
    <property type="entry name" value="lytB_ispH"/>
    <property type="match status" value="1"/>
</dbReference>
<dbReference type="Gene3D" id="3.40.50.11270">
    <property type="match status" value="1"/>
</dbReference>
<dbReference type="Gene3D" id="3.40.1010.20">
    <property type="entry name" value="4-hydroxy-3-methylbut-2-enyl diphosphate reductase, catalytic domain"/>
    <property type="match status" value="2"/>
</dbReference>
<dbReference type="HAMAP" id="MF_00191">
    <property type="entry name" value="IspH"/>
    <property type="match status" value="1"/>
</dbReference>
<dbReference type="InterPro" id="IPR003451">
    <property type="entry name" value="LytB/IspH"/>
</dbReference>
<dbReference type="NCBIfam" id="TIGR00216">
    <property type="entry name" value="ispH_lytB"/>
    <property type="match status" value="1"/>
</dbReference>
<dbReference type="NCBIfam" id="NF009911">
    <property type="entry name" value="PRK13371.1"/>
    <property type="match status" value="1"/>
</dbReference>
<dbReference type="PANTHER" id="PTHR31619">
    <property type="entry name" value="4-HYDROXY-3-METHYLBUT-2-ENYL DIPHOSPHATE REDUCTASE, CHLOROPLASTIC"/>
    <property type="match status" value="1"/>
</dbReference>
<dbReference type="PANTHER" id="PTHR31619:SF5">
    <property type="entry name" value="4-HYDROXY-3-METHYLBUT-2-ENYL DIPHOSPHATE REDUCTASE, CHLOROPLASTIC"/>
    <property type="match status" value="1"/>
</dbReference>
<dbReference type="Pfam" id="PF02401">
    <property type="entry name" value="LYTB"/>
    <property type="match status" value="1"/>
</dbReference>
<proteinExistence type="inferred from homology"/>
<protein>
    <recommendedName>
        <fullName evidence="1">4-hydroxy-3-methylbut-2-enyl diphosphate reductase</fullName>
        <shortName evidence="1">HMBPP reductase</shortName>
        <ecNumber evidence="1">1.17.7.4</ecNumber>
    </recommendedName>
</protein>
<name>ISPH_SYNSC</name>